<name>RL22_NITEC</name>
<gene>
    <name evidence="1" type="primary">rplV</name>
    <name type="ordered locus">Neut_0563</name>
</gene>
<sequence length="110" mass="11994">METSVVLRSVRLSAQKGRLVVNQIRGLQVDQAIKLLTFSPKKGAVIILKLLESAVANAEHNEGADIDELKVARVFIGQGSSLKRVSPRAKGRGNRISKPTCNIFLTVCNR</sequence>
<reference key="1">
    <citation type="journal article" date="2007" name="Environ. Microbiol.">
        <title>Whole-genome analysis of the ammonia-oxidizing bacterium, Nitrosomonas eutropha C91: implications for niche adaptation.</title>
        <authorList>
            <person name="Stein L.Y."/>
            <person name="Arp D.J."/>
            <person name="Berube P.M."/>
            <person name="Chain P.S."/>
            <person name="Hauser L."/>
            <person name="Jetten M.S."/>
            <person name="Klotz M.G."/>
            <person name="Larimer F.W."/>
            <person name="Norton J.M."/>
            <person name="Op den Camp H.J.M."/>
            <person name="Shin M."/>
            <person name="Wei X."/>
        </authorList>
    </citation>
    <scope>NUCLEOTIDE SEQUENCE [LARGE SCALE GENOMIC DNA]</scope>
    <source>
        <strain>DSM 101675 / C91 / Nm57</strain>
    </source>
</reference>
<accession>Q0AIJ0</accession>
<protein>
    <recommendedName>
        <fullName evidence="1">Large ribosomal subunit protein uL22</fullName>
    </recommendedName>
    <alternativeName>
        <fullName evidence="2">50S ribosomal protein L22</fullName>
    </alternativeName>
</protein>
<feature type="chain" id="PRO_1000052615" description="Large ribosomal subunit protein uL22">
    <location>
        <begin position="1"/>
        <end position="110"/>
    </location>
</feature>
<keyword id="KW-0687">Ribonucleoprotein</keyword>
<keyword id="KW-0689">Ribosomal protein</keyword>
<keyword id="KW-0694">RNA-binding</keyword>
<keyword id="KW-0699">rRNA-binding</keyword>
<comment type="function">
    <text evidence="1">This protein binds specifically to 23S rRNA; its binding is stimulated by other ribosomal proteins, e.g. L4, L17, and L20. It is important during the early stages of 50S assembly. It makes multiple contacts with different domains of the 23S rRNA in the assembled 50S subunit and ribosome (By similarity).</text>
</comment>
<comment type="function">
    <text evidence="1">The globular domain of the protein is located near the polypeptide exit tunnel on the outside of the subunit, while an extended beta-hairpin is found that lines the wall of the exit tunnel in the center of the 70S ribosome.</text>
</comment>
<comment type="subunit">
    <text evidence="1">Part of the 50S ribosomal subunit.</text>
</comment>
<comment type="similarity">
    <text evidence="1">Belongs to the universal ribosomal protein uL22 family.</text>
</comment>
<evidence type="ECO:0000255" key="1">
    <source>
        <dbReference type="HAMAP-Rule" id="MF_01331"/>
    </source>
</evidence>
<evidence type="ECO:0000305" key="2"/>
<dbReference type="EMBL" id="CP000450">
    <property type="protein sequence ID" value="ABI58836.1"/>
    <property type="molecule type" value="Genomic_DNA"/>
</dbReference>
<dbReference type="RefSeq" id="WP_011633678.1">
    <property type="nucleotide sequence ID" value="NC_008344.1"/>
</dbReference>
<dbReference type="SMR" id="Q0AIJ0"/>
<dbReference type="STRING" id="335283.Neut_0563"/>
<dbReference type="KEGG" id="net:Neut_0563"/>
<dbReference type="eggNOG" id="COG0091">
    <property type="taxonomic scope" value="Bacteria"/>
</dbReference>
<dbReference type="HOGENOM" id="CLU_083987_3_3_4"/>
<dbReference type="OrthoDB" id="9805969at2"/>
<dbReference type="Proteomes" id="UP000001966">
    <property type="component" value="Chromosome"/>
</dbReference>
<dbReference type="GO" id="GO:0022625">
    <property type="term" value="C:cytosolic large ribosomal subunit"/>
    <property type="evidence" value="ECO:0007669"/>
    <property type="project" value="TreeGrafter"/>
</dbReference>
<dbReference type="GO" id="GO:0019843">
    <property type="term" value="F:rRNA binding"/>
    <property type="evidence" value="ECO:0007669"/>
    <property type="project" value="UniProtKB-UniRule"/>
</dbReference>
<dbReference type="GO" id="GO:0003735">
    <property type="term" value="F:structural constituent of ribosome"/>
    <property type="evidence" value="ECO:0007669"/>
    <property type="project" value="InterPro"/>
</dbReference>
<dbReference type="GO" id="GO:0006412">
    <property type="term" value="P:translation"/>
    <property type="evidence" value="ECO:0007669"/>
    <property type="project" value="UniProtKB-UniRule"/>
</dbReference>
<dbReference type="CDD" id="cd00336">
    <property type="entry name" value="Ribosomal_L22"/>
    <property type="match status" value="1"/>
</dbReference>
<dbReference type="Gene3D" id="3.90.470.10">
    <property type="entry name" value="Ribosomal protein L22/L17"/>
    <property type="match status" value="1"/>
</dbReference>
<dbReference type="HAMAP" id="MF_01331_B">
    <property type="entry name" value="Ribosomal_uL22_B"/>
    <property type="match status" value="1"/>
</dbReference>
<dbReference type="InterPro" id="IPR001063">
    <property type="entry name" value="Ribosomal_uL22"/>
</dbReference>
<dbReference type="InterPro" id="IPR005727">
    <property type="entry name" value="Ribosomal_uL22_bac/chlpt-type"/>
</dbReference>
<dbReference type="InterPro" id="IPR047867">
    <property type="entry name" value="Ribosomal_uL22_bac/org-type"/>
</dbReference>
<dbReference type="InterPro" id="IPR018260">
    <property type="entry name" value="Ribosomal_uL22_CS"/>
</dbReference>
<dbReference type="InterPro" id="IPR036394">
    <property type="entry name" value="Ribosomal_uL22_sf"/>
</dbReference>
<dbReference type="NCBIfam" id="TIGR01044">
    <property type="entry name" value="rplV_bact"/>
    <property type="match status" value="1"/>
</dbReference>
<dbReference type="PANTHER" id="PTHR13501">
    <property type="entry name" value="CHLOROPLAST 50S RIBOSOMAL PROTEIN L22-RELATED"/>
    <property type="match status" value="1"/>
</dbReference>
<dbReference type="PANTHER" id="PTHR13501:SF8">
    <property type="entry name" value="LARGE RIBOSOMAL SUBUNIT PROTEIN UL22M"/>
    <property type="match status" value="1"/>
</dbReference>
<dbReference type="Pfam" id="PF00237">
    <property type="entry name" value="Ribosomal_L22"/>
    <property type="match status" value="1"/>
</dbReference>
<dbReference type="SUPFAM" id="SSF54843">
    <property type="entry name" value="Ribosomal protein L22"/>
    <property type="match status" value="1"/>
</dbReference>
<dbReference type="PROSITE" id="PS00464">
    <property type="entry name" value="RIBOSOMAL_L22"/>
    <property type="match status" value="1"/>
</dbReference>
<proteinExistence type="inferred from homology"/>
<organism>
    <name type="scientific">Nitrosomonas eutropha (strain DSM 101675 / C91 / Nm57)</name>
    <dbReference type="NCBI Taxonomy" id="335283"/>
    <lineage>
        <taxon>Bacteria</taxon>
        <taxon>Pseudomonadati</taxon>
        <taxon>Pseudomonadota</taxon>
        <taxon>Betaproteobacteria</taxon>
        <taxon>Nitrosomonadales</taxon>
        <taxon>Nitrosomonadaceae</taxon>
        <taxon>Nitrosomonas</taxon>
    </lineage>
</organism>